<protein>
    <recommendedName>
        <fullName evidence="2">Selenoprotein H</fullName>
        <shortName>SelH</shortName>
    </recommendedName>
</protein>
<feature type="chain" id="PRO_0000318655" description="Selenoprotein H">
    <location>
        <begin position="1"/>
        <end position="122"/>
    </location>
</feature>
<feature type="non-standard amino acid" description="Selenocysteine">
    <location>
        <position position="44"/>
    </location>
</feature>
<feature type="modified residue" description="N6-acetyllysine" evidence="2">
    <location>
        <position position="20"/>
    </location>
</feature>
<feature type="cross-link" description="Cysteinyl-selenocysteine (Cys-Sec); redox-active" evidence="1">
    <location>
        <begin position="41"/>
        <end position="44"/>
    </location>
</feature>
<dbReference type="EMBL" id="AB169408">
    <property type="protein sequence ID" value="BAE01491.1"/>
    <property type="status" value="ALT_SEQ"/>
    <property type="molecule type" value="mRNA"/>
</dbReference>
<dbReference type="STRING" id="9541.ENSMFAP00000035318"/>
<dbReference type="Proteomes" id="UP000233100">
    <property type="component" value="Unplaced"/>
</dbReference>
<dbReference type="GO" id="GO:0005794">
    <property type="term" value="C:Golgi apparatus"/>
    <property type="evidence" value="ECO:0007669"/>
    <property type="project" value="TreeGrafter"/>
</dbReference>
<dbReference type="FunFam" id="3.40.30.10:FF:000269">
    <property type="entry name" value="Selenoprotein H"/>
    <property type="match status" value="1"/>
</dbReference>
<dbReference type="Gene3D" id="3.40.30.10">
    <property type="entry name" value="Glutaredoxin"/>
    <property type="match status" value="1"/>
</dbReference>
<dbReference type="InterPro" id="IPR011893">
    <property type="entry name" value="Selenoprotein_Rdx-typ"/>
</dbReference>
<dbReference type="InterPro" id="IPR052674">
    <property type="entry name" value="SelWTH-like"/>
</dbReference>
<dbReference type="InterPro" id="IPR036249">
    <property type="entry name" value="Thioredoxin-like_sf"/>
</dbReference>
<dbReference type="NCBIfam" id="TIGR02174">
    <property type="entry name" value="CXXU_selWTH"/>
    <property type="match status" value="1"/>
</dbReference>
<dbReference type="PANTHER" id="PTHR33638">
    <property type="entry name" value="SELENOPROTEIN H"/>
    <property type="match status" value="1"/>
</dbReference>
<dbReference type="PANTHER" id="PTHR33638:SF1">
    <property type="entry name" value="SELENOPROTEIN H"/>
    <property type="match status" value="1"/>
</dbReference>
<dbReference type="Pfam" id="PF10262">
    <property type="entry name" value="Rdx"/>
    <property type="match status" value="1"/>
</dbReference>
<dbReference type="SUPFAM" id="SSF52833">
    <property type="entry name" value="Thioredoxin-like"/>
    <property type="match status" value="1"/>
</dbReference>
<keyword id="KW-0007">Acetylation</keyword>
<keyword id="KW-0676">Redox-active center</keyword>
<keyword id="KW-1185">Reference proteome</keyword>
<keyword id="KW-0712">Selenocysteine</keyword>
<gene>
    <name evidence="2" type="primary">SELENOH</name>
    <name evidence="4" type="ORF">QtsA-19841</name>
</gene>
<name>SELH_MACFA</name>
<reference key="1">
    <citation type="submission" date="2005-06" db="EMBL/GenBank/DDBJ databases">
        <title>DNA sequences of macaque genes expressed in brain or testis and its evolutionary implications.</title>
        <authorList>
            <consortium name="International consortium for macaque cDNA sequencing and analysis"/>
        </authorList>
    </citation>
    <scope>NUCLEOTIDE SEQUENCE [LARGE SCALE MRNA]</scope>
    <source>
        <tissue>Testis</tissue>
    </source>
</reference>
<comment type="function">
    <text evidence="3">May be involved in a redox-related process.</text>
</comment>
<comment type="similarity">
    <text evidence="3">Belongs to the SelWTH family.</text>
</comment>
<comment type="sequence caution" evidence="3">
    <conflict type="erroneous termination">
        <sequence resource="EMBL-CDS" id="BAE01491"/>
    </conflict>
    <text>Truncated C-terminus.</text>
</comment>
<comment type="sequence caution" evidence="3">
    <conflict type="frameshift">
        <sequence resource="EMBL-CDS" id="BAE01491"/>
    </conflict>
</comment>
<sequence length="122" mass="13473">MAPRGRKRKAEAAMVAAAEKQERLANSGEGMEETTVVIEHCTSURVYGXNAAALSQALRLEAPELPVKVNPTKPRRGSFEVTLLRPDGSSAELWTGIKKGPPRKLKFPEPQEVVEELKKYLS</sequence>
<evidence type="ECO:0000250" key="1"/>
<evidence type="ECO:0000250" key="2">
    <source>
        <dbReference type="UniProtKB" id="Q8IZQ5"/>
    </source>
</evidence>
<evidence type="ECO:0000305" key="3"/>
<evidence type="ECO:0000312" key="4">
    <source>
        <dbReference type="EMBL" id="BAE01491.1"/>
    </source>
</evidence>
<proteinExistence type="evidence at transcript level"/>
<organism>
    <name type="scientific">Macaca fascicularis</name>
    <name type="common">Crab-eating macaque</name>
    <name type="synonym">Cynomolgus monkey</name>
    <dbReference type="NCBI Taxonomy" id="9541"/>
    <lineage>
        <taxon>Eukaryota</taxon>
        <taxon>Metazoa</taxon>
        <taxon>Chordata</taxon>
        <taxon>Craniata</taxon>
        <taxon>Vertebrata</taxon>
        <taxon>Euteleostomi</taxon>
        <taxon>Mammalia</taxon>
        <taxon>Eutheria</taxon>
        <taxon>Euarchontoglires</taxon>
        <taxon>Primates</taxon>
        <taxon>Haplorrhini</taxon>
        <taxon>Catarrhini</taxon>
        <taxon>Cercopithecidae</taxon>
        <taxon>Cercopithecinae</taxon>
        <taxon>Macaca</taxon>
    </lineage>
</organism>
<accession>Q4R5Y4</accession>